<accession>B7M0C6</accession>
<sequence>MRLPIFLDTDPGIDDAVAIAAAIFAPELDLQLMTTVAGNVSVEKTTRNALQLLHFWNAEIPLAQGAAVPLVRAPRDAASVHGESGMAGYDFVEHNRKPLGIPAFLAIRDALMRAPEPVTLVAIGPLTNIALLLSQCPECKPYIRRLVIMGGSAGRGNCTPNAEFNIAADPEAAACVFRSGIEIVMCGLDVTNQAILTPDYLATLPELNRTGKMLHALFSHYRSGSMQSGLRMHDLCAIAWLVRPDLFTLKPCFVAVETQGEFTSGTTVVDIDGCLGKPANVKVALDLDVKGFQQWVAEVLALAS</sequence>
<name>RIHC_ECO8A</name>
<evidence type="ECO:0000255" key="1">
    <source>
        <dbReference type="HAMAP-Rule" id="MF_01432"/>
    </source>
</evidence>
<protein>
    <recommendedName>
        <fullName evidence="1">Non-specific ribonucleoside hydrolase RihC</fullName>
        <ecNumber evidence="1">3.2.-.-</ecNumber>
    </recommendedName>
    <alternativeName>
        <fullName evidence="1">Purine/pyrimidine ribonucleoside hydrolase</fullName>
    </alternativeName>
</protein>
<gene>
    <name evidence="1" type="primary">rihC</name>
    <name type="ordered locus">ECIAI1_0031</name>
</gene>
<reference key="1">
    <citation type="journal article" date="2009" name="PLoS Genet.">
        <title>Organised genome dynamics in the Escherichia coli species results in highly diverse adaptive paths.</title>
        <authorList>
            <person name="Touchon M."/>
            <person name="Hoede C."/>
            <person name="Tenaillon O."/>
            <person name="Barbe V."/>
            <person name="Baeriswyl S."/>
            <person name="Bidet P."/>
            <person name="Bingen E."/>
            <person name="Bonacorsi S."/>
            <person name="Bouchier C."/>
            <person name="Bouvet O."/>
            <person name="Calteau A."/>
            <person name="Chiapello H."/>
            <person name="Clermont O."/>
            <person name="Cruveiller S."/>
            <person name="Danchin A."/>
            <person name="Diard M."/>
            <person name="Dossat C."/>
            <person name="Karoui M.E."/>
            <person name="Frapy E."/>
            <person name="Garry L."/>
            <person name="Ghigo J.M."/>
            <person name="Gilles A.M."/>
            <person name="Johnson J."/>
            <person name="Le Bouguenec C."/>
            <person name="Lescat M."/>
            <person name="Mangenot S."/>
            <person name="Martinez-Jehanne V."/>
            <person name="Matic I."/>
            <person name="Nassif X."/>
            <person name="Oztas S."/>
            <person name="Petit M.A."/>
            <person name="Pichon C."/>
            <person name="Rouy Z."/>
            <person name="Ruf C.S."/>
            <person name="Schneider D."/>
            <person name="Tourret J."/>
            <person name="Vacherie B."/>
            <person name="Vallenet D."/>
            <person name="Medigue C."/>
            <person name="Rocha E.P.C."/>
            <person name="Denamur E."/>
        </authorList>
    </citation>
    <scope>NUCLEOTIDE SEQUENCE [LARGE SCALE GENOMIC DNA]</scope>
    <source>
        <strain>IAI1</strain>
    </source>
</reference>
<keyword id="KW-0326">Glycosidase</keyword>
<keyword id="KW-0378">Hydrolase</keyword>
<dbReference type="EC" id="3.2.-.-" evidence="1"/>
<dbReference type="EMBL" id="CU928160">
    <property type="protein sequence ID" value="CAQ96921.1"/>
    <property type="molecule type" value="Genomic_DNA"/>
</dbReference>
<dbReference type="RefSeq" id="WP_001239133.1">
    <property type="nucleotide sequence ID" value="NC_011741.1"/>
</dbReference>
<dbReference type="SMR" id="B7M0C6"/>
<dbReference type="KEGG" id="ecr:ECIAI1_0031"/>
<dbReference type="HOGENOM" id="CLU_036838_2_2_6"/>
<dbReference type="GO" id="GO:0005829">
    <property type="term" value="C:cytosol"/>
    <property type="evidence" value="ECO:0007669"/>
    <property type="project" value="TreeGrafter"/>
</dbReference>
<dbReference type="GO" id="GO:0008477">
    <property type="term" value="F:purine nucleosidase activity"/>
    <property type="evidence" value="ECO:0007669"/>
    <property type="project" value="TreeGrafter"/>
</dbReference>
<dbReference type="GO" id="GO:0045437">
    <property type="term" value="F:uridine nucleosidase activity"/>
    <property type="evidence" value="ECO:0007669"/>
    <property type="project" value="UniProtKB-ARBA"/>
</dbReference>
<dbReference type="GO" id="GO:0006144">
    <property type="term" value="P:purine nucleobase metabolic process"/>
    <property type="evidence" value="ECO:0007669"/>
    <property type="project" value="UniProtKB-UniRule"/>
</dbReference>
<dbReference type="GO" id="GO:0006152">
    <property type="term" value="P:purine nucleoside catabolic process"/>
    <property type="evidence" value="ECO:0007669"/>
    <property type="project" value="TreeGrafter"/>
</dbReference>
<dbReference type="GO" id="GO:0006206">
    <property type="term" value="P:pyrimidine nucleobase metabolic process"/>
    <property type="evidence" value="ECO:0007669"/>
    <property type="project" value="UniProtKB-UniRule"/>
</dbReference>
<dbReference type="CDD" id="cd02651">
    <property type="entry name" value="nuc_hydro_IU_UC_XIUA"/>
    <property type="match status" value="1"/>
</dbReference>
<dbReference type="FunFam" id="3.90.245.10:FF:000002">
    <property type="entry name" value="Non-specific ribonucleoside hydrolase RihC"/>
    <property type="match status" value="1"/>
</dbReference>
<dbReference type="Gene3D" id="3.90.245.10">
    <property type="entry name" value="Ribonucleoside hydrolase-like"/>
    <property type="match status" value="1"/>
</dbReference>
<dbReference type="HAMAP" id="MF_01432">
    <property type="entry name" value="Nucleosid_hydro_RihC"/>
    <property type="match status" value="1"/>
</dbReference>
<dbReference type="InterPro" id="IPR015910">
    <property type="entry name" value="I/U_nuclsd_hydro_CS"/>
</dbReference>
<dbReference type="InterPro" id="IPR001910">
    <property type="entry name" value="Inosine/uridine_hydrolase_dom"/>
</dbReference>
<dbReference type="InterPro" id="IPR023186">
    <property type="entry name" value="IUNH"/>
</dbReference>
<dbReference type="InterPro" id="IPR022976">
    <property type="entry name" value="Nucleosid_hydro_RihC_nonspecif"/>
</dbReference>
<dbReference type="InterPro" id="IPR036452">
    <property type="entry name" value="Ribo_hydro-like"/>
</dbReference>
<dbReference type="NCBIfam" id="NF008036">
    <property type="entry name" value="PRK10768.1"/>
    <property type="match status" value="1"/>
</dbReference>
<dbReference type="PANTHER" id="PTHR12304">
    <property type="entry name" value="INOSINE-URIDINE PREFERRING NUCLEOSIDE HYDROLASE"/>
    <property type="match status" value="1"/>
</dbReference>
<dbReference type="PANTHER" id="PTHR12304:SF15">
    <property type="entry name" value="NON-SPECIFIC RIBONUCLEOSIDE HYDROLASE RIHC"/>
    <property type="match status" value="1"/>
</dbReference>
<dbReference type="Pfam" id="PF01156">
    <property type="entry name" value="IU_nuc_hydro"/>
    <property type="match status" value="1"/>
</dbReference>
<dbReference type="SUPFAM" id="SSF53590">
    <property type="entry name" value="Nucleoside hydrolase"/>
    <property type="match status" value="1"/>
</dbReference>
<dbReference type="PROSITE" id="PS01247">
    <property type="entry name" value="IUNH"/>
    <property type="match status" value="1"/>
</dbReference>
<feature type="chain" id="PRO_1000145811" description="Non-specific ribonucleoside hydrolase RihC">
    <location>
        <begin position="1"/>
        <end position="304"/>
    </location>
</feature>
<feature type="active site" evidence="1">
    <location>
        <position position="233"/>
    </location>
</feature>
<comment type="function">
    <text evidence="1">Hydrolyzes both purine and pyrimidine ribonucleosides with a broad-substrate specificity.</text>
</comment>
<comment type="similarity">
    <text evidence="1">Belongs to the IUNH family. RihC subfamily.</text>
</comment>
<proteinExistence type="inferred from homology"/>
<organism>
    <name type="scientific">Escherichia coli O8 (strain IAI1)</name>
    <dbReference type="NCBI Taxonomy" id="585034"/>
    <lineage>
        <taxon>Bacteria</taxon>
        <taxon>Pseudomonadati</taxon>
        <taxon>Pseudomonadota</taxon>
        <taxon>Gammaproteobacteria</taxon>
        <taxon>Enterobacterales</taxon>
        <taxon>Enterobacteriaceae</taxon>
        <taxon>Escherichia</taxon>
    </lineage>
</organism>